<keyword id="KW-0012">Acyltransferase</keyword>
<keyword id="KW-0903">Direct protein sequencing</keyword>
<keyword id="KW-0256">Endoplasmic reticulum</keyword>
<keyword id="KW-0444">Lipid biosynthesis</keyword>
<keyword id="KW-0443">Lipid metabolism</keyword>
<keyword id="KW-0472">Membrane</keyword>
<keyword id="KW-0539">Nucleus</keyword>
<keyword id="KW-0594">Phospholipid biosynthesis</keyword>
<keyword id="KW-1208">Phospholipid metabolism</keyword>
<keyword id="KW-1185">Reference proteome</keyword>
<keyword id="KW-0808">Transferase</keyword>
<keyword id="KW-0812">Transmembrane</keyword>
<keyword id="KW-1133">Transmembrane helix</keyword>
<evidence type="ECO:0000250" key="1">
    <source>
        <dbReference type="UniProtKB" id="Q9NRZ7"/>
    </source>
</evidence>
<evidence type="ECO:0000255" key="2"/>
<evidence type="ECO:0000269" key="3">
    <source>
    </source>
</evidence>
<evidence type="ECO:0000269" key="4">
    <source>
    </source>
</evidence>
<evidence type="ECO:0000303" key="5">
    <source>
    </source>
</evidence>
<evidence type="ECO:0000305" key="6"/>
<evidence type="ECO:0000305" key="7">
    <source>
    </source>
</evidence>
<evidence type="ECO:0000305" key="8">
    <source>
    </source>
</evidence>
<evidence type="ECO:0000312" key="9">
    <source>
        <dbReference type="MGI" id="MGI:1336186"/>
    </source>
</evidence>
<gene>
    <name evidence="9" type="primary">Agpat3</name>
    <name evidence="5" type="synonym">Lpaat3</name>
</gene>
<accession>Q9D517</accession>
<accession>C4B4E7</accession>
<accession>Q7TT39</accession>
<accession>Q8BST2</accession>
<dbReference type="EC" id="2.3.1.51" evidence="3 4"/>
<dbReference type="EMBL" id="AY167588">
    <property type="protein sequence ID" value="AAN75574.1"/>
    <property type="molecule type" value="mRNA"/>
</dbReference>
<dbReference type="EMBL" id="AB377215">
    <property type="protein sequence ID" value="BAH59614.1"/>
    <property type="molecule type" value="mRNA"/>
</dbReference>
<dbReference type="EMBL" id="AK015906">
    <property type="protein sequence ID" value="BAB30025.2"/>
    <property type="molecule type" value="mRNA"/>
</dbReference>
<dbReference type="EMBL" id="AK030607">
    <property type="protein sequence ID" value="BAC27043.1"/>
    <property type="status" value="ALT_INIT"/>
    <property type="molecule type" value="mRNA"/>
</dbReference>
<dbReference type="EMBL" id="AK075715">
    <property type="protein sequence ID" value="BAC35905.1"/>
    <property type="molecule type" value="mRNA"/>
</dbReference>
<dbReference type="EMBL" id="AK076414">
    <property type="protein sequence ID" value="BAC36329.1"/>
    <property type="molecule type" value="mRNA"/>
</dbReference>
<dbReference type="EMBL" id="CH466553">
    <property type="protein sequence ID" value="EDL31738.1"/>
    <property type="molecule type" value="Genomic_DNA"/>
</dbReference>
<dbReference type="EMBL" id="CH466553">
    <property type="protein sequence ID" value="EDL31739.1"/>
    <property type="molecule type" value="Genomic_DNA"/>
</dbReference>
<dbReference type="EMBL" id="CH466553">
    <property type="protein sequence ID" value="EDL31740.1"/>
    <property type="molecule type" value="Genomic_DNA"/>
</dbReference>
<dbReference type="EMBL" id="CH466553">
    <property type="protein sequence ID" value="EDL31742.1"/>
    <property type="molecule type" value="Genomic_DNA"/>
</dbReference>
<dbReference type="EMBL" id="BC052382">
    <property type="protein sequence ID" value="AAH52382.1"/>
    <property type="molecule type" value="mRNA"/>
</dbReference>
<dbReference type="EMBL" id="BC058519">
    <property type="protein sequence ID" value="AAH58519.1"/>
    <property type="molecule type" value="mRNA"/>
</dbReference>
<dbReference type="CCDS" id="CCDS23963.1"/>
<dbReference type="RefSeq" id="NP_001391799.1">
    <property type="nucleotide sequence ID" value="NM_001404870.1"/>
</dbReference>
<dbReference type="RefSeq" id="NP_001391800.1">
    <property type="nucleotide sequence ID" value="NM_001404871.1"/>
</dbReference>
<dbReference type="RefSeq" id="NP_001391801.1">
    <property type="nucleotide sequence ID" value="NM_001404872.1"/>
</dbReference>
<dbReference type="RefSeq" id="NP_001391802.1">
    <property type="nucleotide sequence ID" value="NM_001404873.1"/>
</dbReference>
<dbReference type="RefSeq" id="NP_001391803.1">
    <property type="nucleotide sequence ID" value="NM_001404874.1"/>
</dbReference>
<dbReference type="RefSeq" id="NP_001391804.1">
    <property type="nucleotide sequence ID" value="NM_001404875.1"/>
</dbReference>
<dbReference type="RefSeq" id="NP_001391805.1">
    <property type="nucleotide sequence ID" value="NM_001404876.1"/>
</dbReference>
<dbReference type="RefSeq" id="NP_001391806.1">
    <property type="nucleotide sequence ID" value="NM_001404877.1"/>
</dbReference>
<dbReference type="RefSeq" id="NP_443747.2">
    <property type="nucleotide sequence ID" value="NM_053014.3"/>
</dbReference>
<dbReference type="RefSeq" id="XP_006513779.1">
    <property type="nucleotide sequence ID" value="XM_006513716.2"/>
</dbReference>
<dbReference type="RefSeq" id="XP_006513780.1">
    <property type="nucleotide sequence ID" value="XM_006513717.3"/>
</dbReference>
<dbReference type="RefSeq" id="XP_006513781.1">
    <property type="nucleotide sequence ID" value="XM_006513718.1"/>
</dbReference>
<dbReference type="RefSeq" id="XP_006513782.1">
    <property type="nucleotide sequence ID" value="XM_006513719.2"/>
</dbReference>
<dbReference type="RefSeq" id="XP_006513783.1">
    <property type="nucleotide sequence ID" value="XM_006513720.1"/>
</dbReference>
<dbReference type="RefSeq" id="XP_006513784.1">
    <property type="nucleotide sequence ID" value="XM_006513721.1"/>
</dbReference>
<dbReference type="RefSeq" id="XP_006513785.1">
    <property type="nucleotide sequence ID" value="XM_006513722.3"/>
</dbReference>
<dbReference type="RefSeq" id="XP_006513786.1">
    <property type="nucleotide sequence ID" value="XM_006513723.3"/>
</dbReference>
<dbReference type="RefSeq" id="XP_036011691.1">
    <property type="nucleotide sequence ID" value="XM_036155798.1"/>
</dbReference>
<dbReference type="SMR" id="Q9D517"/>
<dbReference type="BioGRID" id="205803">
    <property type="interactions" value="5"/>
</dbReference>
<dbReference type="FunCoup" id="Q9D517">
    <property type="interactions" value="2066"/>
</dbReference>
<dbReference type="STRING" id="10090.ENSMUSP00000001240"/>
<dbReference type="SwissLipids" id="SLP:000000097"/>
<dbReference type="GlyGen" id="Q9D517">
    <property type="glycosylation" value="1 site, 1 O-linked glycan (1 site)"/>
</dbReference>
<dbReference type="iPTMnet" id="Q9D517"/>
<dbReference type="PhosphoSitePlus" id="Q9D517"/>
<dbReference type="SwissPalm" id="Q9D517"/>
<dbReference type="jPOST" id="Q9D517"/>
<dbReference type="PaxDb" id="10090-ENSMUSP00000101028"/>
<dbReference type="PeptideAtlas" id="Q9D517"/>
<dbReference type="ProteomicsDB" id="289922"/>
<dbReference type="Pumba" id="Q9D517"/>
<dbReference type="Antibodypedia" id="24081">
    <property type="antibodies" value="164 antibodies from 26 providers"/>
</dbReference>
<dbReference type="DNASU" id="28169"/>
<dbReference type="Ensembl" id="ENSMUST00000001240.12">
    <property type="protein sequence ID" value="ENSMUSP00000001240.6"/>
    <property type="gene ID" value="ENSMUSG00000001211.16"/>
</dbReference>
<dbReference type="Ensembl" id="ENSMUST00000105387.8">
    <property type="protein sequence ID" value="ENSMUSP00000101026.2"/>
    <property type="gene ID" value="ENSMUSG00000001211.16"/>
</dbReference>
<dbReference type="Ensembl" id="ENSMUST00000105388.8">
    <property type="protein sequence ID" value="ENSMUSP00000101027.2"/>
    <property type="gene ID" value="ENSMUSG00000001211.16"/>
</dbReference>
<dbReference type="Ensembl" id="ENSMUST00000105389.8">
    <property type="protein sequence ID" value="ENSMUSP00000101028.2"/>
    <property type="gene ID" value="ENSMUSG00000001211.16"/>
</dbReference>
<dbReference type="Ensembl" id="ENSMUST00000105390.8">
    <property type="protein sequence ID" value="ENSMUSP00000101029.2"/>
    <property type="gene ID" value="ENSMUSG00000001211.16"/>
</dbReference>
<dbReference type="Ensembl" id="ENSMUST00000166360.8">
    <property type="protein sequence ID" value="ENSMUSP00000132954.2"/>
    <property type="gene ID" value="ENSMUSG00000001211.16"/>
</dbReference>
<dbReference type="GeneID" id="28169"/>
<dbReference type="KEGG" id="mmu:28169"/>
<dbReference type="UCSC" id="uc007fxo.1">
    <property type="organism name" value="mouse"/>
</dbReference>
<dbReference type="AGR" id="MGI:1336186"/>
<dbReference type="CTD" id="56894"/>
<dbReference type="MGI" id="MGI:1336186">
    <property type="gene designation" value="Agpat3"/>
</dbReference>
<dbReference type="VEuPathDB" id="HostDB:ENSMUSG00000001211"/>
<dbReference type="eggNOG" id="KOG1505">
    <property type="taxonomic scope" value="Eukaryota"/>
</dbReference>
<dbReference type="GeneTree" id="ENSGT00950000182836"/>
<dbReference type="HOGENOM" id="CLU_041844_5_2_1"/>
<dbReference type="InParanoid" id="Q9D517"/>
<dbReference type="OMA" id="RMVMIAN"/>
<dbReference type="OrthoDB" id="189226at2759"/>
<dbReference type="PhylomeDB" id="Q9D517"/>
<dbReference type="TreeFam" id="TF314065"/>
<dbReference type="BRENDA" id="2.3.1.51">
    <property type="organism ID" value="3474"/>
</dbReference>
<dbReference type="Reactome" id="R-MMU-1483166">
    <property type="pathway name" value="Synthesis of PA"/>
</dbReference>
<dbReference type="Reactome" id="R-MMU-6811436">
    <property type="pathway name" value="COPI-independent Golgi-to-ER retrograde traffic"/>
</dbReference>
<dbReference type="SABIO-RK" id="Q9D517"/>
<dbReference type="UniPathway" id="UPA00557">
    <property type="reaction ID" value="UER00613"/>
</dbReference>
<dbReference type="BioGRID-ORCS" id="28169">
    <property type="hits" value="3 hits in 79 CRISPR screens"/>
</dbReference>
<dbReference type="ChiTaRS" id="Agpat3">
    <property type="organism name" value="mouse"/>
</dbReference>
<dbReference type="PRO" id="PR:Q9D517"/>
<dbReference type="Proteomes" id="UP000000589">
    <property type="component" value="Chromosome 10"/>
</dbReference>
<dbReference type="RNAct" id="Q9D517">
    <property type="molecule type" value="protein"/>
</dbReference>
<dbReference type="Bgee" id="ENSMUSG00000001211">
    <property type="expression patterns" value="Expressed in retinal neural layer and 270 other cell types or tissues"/>
</dbReference>
<dbReference type="ExpressionAtlas" id="Q9D517">
    <property type="expression patterns" value="baseline and differential"/>
</dbReference>
<dbReference type="GO" id="GO:0005783">
    <property type="term" value="C:endoplasmic reticulum"/>
    <property type="evidence" value="ECO:0000314"/>
    <property type="project" value="MGI"/>
</dbReference>
<dbReference type="GO" id="GO:0005789">
    <property type="term" value="C:endoplasmic reticulum membrane"/>
    <property type="evidence" value="ECO:0000250"/>
    <property type="project" value="UniProtKB"/>
</dbReference>
<dbReference type="GO" id="GO:0005635">
    <property type="term" value="C:nuclear envelope"/>
    <property type="evidence" value="ECO:0000250"/>
    <property type="project" value="UniProtKB"/>
</dbReference>
<dbReference type="GO" id="GO:0003841">
    <property type="term" value="F:1-acylglycerol-3-phosphate O-acyltransferase activity"/>
    <property type="evidence" value="ECO:0000250"/>
    <property type="project" value="UniProtKB"/>
</dbReference>
<dbReference type="GO" id="GO:0042171">
    <property type="term" value="F:lysophosphatidic acid acyltransferase activity"/>
    <property type="evidence" value="ECO:0000314"/>
    <property type="project" value="MGI"/>
</dbReference>
<dbReference type="GO" id="GO:0016024">
    <property type="term" value="P:CDP-diacylglycerol biosynthetic process"/>
    <property type="evidence" value="ECO:0007669"/>
    <property type="project" value="UniProtKB-UniPathway"/>
</dbReference>
<dbReference type="CDD" id="cd07990">
    <property type="entry name" value="LPLAT_LCLAT1-like"/>
    <property type="match status" value="1"/>
</dbReference>
<dbReference type="InterPro" id="IPR032098">
    <property type="entry name" value="Acyltransf_C"/>
</dbReference>
<dbReference type="InterPro" id="IPR002123">
    <property type="entry name" value="Plipid/glycerol_acylTrfase"/>
</dbReference>
<dbReference type="PANTHER" id="PTHR10983:SF9">
    <property type="entry name" value="1-ACYL-SN-GLYCEROL-3-PHOSPHATE ACYLTRANSFERASE GAMMA"/>
    <property type="match status" value="1"/>
</dbReference>
<dbReference type="PANTHER" id="PTHR10983">
    <property type="entry name" value="1-ACYLGLYCEROL-3-PHOSPHATE ACYLTRANSFERASE-RELATED"/>
    <property type="match status" value="1"/>
</dbReference>
<dbReference type="Pfam" id="PF16076">
    <property type="entry name" value="Acyltransf_C"/>
    <property type="match status" value="1"/>
</dbReference>
<dbReference type="Pfam" id="PF01553">
    <property type="entry name" value="Acyltransferase"/>
    <property type="match status" value="1"/>
</dbReference>
<dbReference type="SMART" id="SM00563">
    <property type="entry name" value="PlsC"/>
    <property type="match status" value="1"/>
</dbReference>
<dbReference type="SUPFAM" id="SSF69593">
    <property type="entry name" value="Glycerol-3-phosphate (1)-acyltransferase"/>
    <property type="match status" value="1"/>
</dbReference>
<proteinExistence type="evidence at protein level"/>
<name>PLCC_MOUSE</name>
<comment type="function">
    <text evidence="1 3 4">Converts 1-acyl-sn-glycerol-3-phosphate (lysophosphatidic acid or LPA) into 1,2-diacyl-sn-glycerol-3-phosphate (phosphatidic acid or PA) by incorporating an acyl moiety at the sn-2 position of the glycerol backbone (PubMed:15367102). Acts on LPA containing saturated or unsaturated fatty acids C16:0-C20:4 at the sn-1 position using C18:1, C20:4 or C18:2-CoA as the acyl donor (By similarity). Also acts on lysophosphatidylcholine, lysophosphatidylinositol and lysophosphatidylserine using C18:1 or C20:4-CoA (By similarity). Has a preference for arachidonoyl-CoA as a donor (PubMed:19114731). Also has a modest lysophosphatidylinositol acyltransferase (LPIAT) activity, converts lysophosphatidylinositol (LPI) into phosphatidylinositol (PubMed:19114731).</text>
</comment>
<comment type="catalytic activity">
    <reaction evidence="3 4">
        <text>a 1-acyl-sn-glycero-3-phosphate + an acyl-CoA = a 1,2-diacyl-sn-glycero-3-phosphate + CoA</text>
        <dbReference type="Rhea" id="RHEA:19709"/>
        <dbReference type="ChEBI" id="CHEBI:57287"/>
        <dbReference type="ChEBI" id="CHEBI:57970"/>
        <dbReference type="ChEBI" id="CHEBI:58342"/>
        <dbReference type="ChEBI" id="CHEBI:58608"/>
        <dbReference type="EC" id="2.3.1.51"/>
    </reaction>
    <physiologicalReaction direction="left-to-right" evidence="7 8">
        <dbReference type="Rhea" id="RHEA:19710"/>
    </physiologicalReaction>
</comment>
<comment type="catalytic activity">
    <reaction evidence="1">
        <text>pentadecanoyl-CoA + 1-(9Z-octadecenoyl)-sn-glycero-3-phosphate = 1-(9Z)-octadecenoyl-2-pentadecanoyl-sn-glycero-3-phosphate + CoA</text>
        <dbReference type="Rhea" id="RHEA:37175"/>
        <dbReference type="ChEBI" id="CHEBI:57287"/>
        <dbReference type="ChEBI" id="CHEBI:74309"/>
        <dbReference type="ChEBI" id="CHEBI:74544"/>
        <dbReference type="ChEBI" id="CHEBI:74578"/>
    </reaction>
    <physiologicalReaction direction="left-to-right" evidence="1">
        <dbReference type="Rhea" id="RHEA:37176"/>
    </physiologicalReaction>
</comment>
<comment type="catalytic activity">
    <reaction evidence="1">
        <text>heptadecanoyl-CoA + 1-(9Z-octadecenoyl)-sn-glycero-3-phosphate = 1-(9Z)-octadecenoyl-2-heptadecanoyl-sn-glycero-3-phosphate + CoA</text>
        <dbReference type="Rhea" id="RHEA:37155"/>
        <dbReference type="ChEBI" id="CHEBI:57287"/>
        <dbReference type="ChEBI" id="CHEBI:74307"/>
        <dbReference type="ChEBI" id="CHEBI:74544"/>
        <dbReference type="ChEBI" id="CHEBI:74558"/>
    </reaction>
    <physiologicalReaction direction="left-to-right" evidence="1">
        <dbReference type="Rhea" id="RHEA:37156"/>
    </physiologicalReaction>
</comment>
<comment type="catalytic activity">
    <reaction evidence="1">
        <text>1-(9Z-octadecenoyl)-sn-glycero-3-phosphate + octadecanoyl-CoA = 1-(9Z-octadecenoyl)-2-octadecanoyl-sn-glycero-3-phosphate + CoA</text>
        <dbReference type="Rhea" id="RHEA:37147"/>
        <dbReference type="ChEBI" id="CHEBI:57287"/>
        <dbReference type="ChEBI" id="CHEBI:57394"/>
        <dbReference type="ChEBI" id="CHEBI:74544"/>
        <dbReference type="ChEBI" id="CHEBI:74552"/>
    </reaction>
    <physiologicalReaction direction="left-to-right" evidence="1">
        <dbReference type="Rhea" id="RHEA:37148"/>
    </physiologicalReaction>
</comment>
<comment type="catalytic activity">
    <reaction evidence="1">
        <text>nonadecanoyl-CoA + 1-(9Z-octadecenoyl)-sn-glycero-3-phosphate = 1-(9Z)-octadecenoyl-2-nonadecanoyl-sn-glycero-3-phosphate + CoA</text>
        <dbReference type="Rhea" id="RHEA:37595"/>
        <dbReference type="ChEBI" id="CHEBI:57287"/>
        <dbReference type="ChEBI" id="CHEBI:74544"/>
        <dbReference type="ChEBI" id="CHEBI:75104"/>
        <dbReference type="ChEBI" id="CHEBI:75105"/>
    </reaction>
    <physiologicalReaction direction="left-to-right" evidence="1">
        <dbReference type="Rhea" id="RHEA:37596"/>
    </physiologicalReaction>
</comment>
<comment type="catalytic activity">
    <reaction evidence="4">
        <text>1-(9Z-octadecenoyl)-sn-glycero-3-phosphate + (5Z,8Z,11Z,14Z)-eicosatetraenoyl-CoA = 1-(9Z)-octadecenoyl-2-(5Z,8Z,11Z,14Z)-eicosatetraenoyl-sn-glycero-3-phosphate + CoA</text>
        <dbReference type="Rhea" id="RHEA:37443"/>
        <dbReference type="ChEBI" id="CHEBI:57287"/>
        <dbReference type="ChEBI" id="CHEBI:57368"/>
        <dbReference type="ChEBI" id="CHEBI:74544"/>
        <dbReference type="ChEBI" id="CHEBI:74928"/>
    </reaction>
    <physiologicalReaction direction="left-to-right" evidence="8">
        <dbReference type="Rhea" id="RHEA:37444"/>
    </physiologicalReaction>
</comment>
<comment type="catalytic activity">
    <reaction evidence="1">
        <text>1-(9Z-octadecenoyl)-sn-glycero-3-phosphate + (9Z)-octadecenoyl-CoA = 1,2-di-(9Z-octadecenoyl)-sn-glycero-3-phosphate + CoA</text>
        <dbReference type="Rhea" id="RHEA:37131"/>
        <dbReference type="ChEBI" id="CHEBI:57287"/>
        <dbReference type="ChEBI" id="CHEBI:57387"/>
        <dbReference type="ChEBI" id="CHEBI:74544"/>
        <dbReference type="ChEBI" id="CHEBI:74546"/>
    </reaction>
    <physiologicalReaction direction="left-to-right" evidence="1">
        <dbReference type="Rhea" id="RHEA:37132"/>
    </physiologicalReaction>
</comment>
<comment type="catalytic activity">
    <reaction evidence="1">
        <text>1-(9Z-octadecenoyl)-sn-glycero-3-phosphate + (9Z,12Z)-octadecadienoyl-CoA = 1-(9Z)-octadecenoyl-2-(9Z,12Z)-octadecadienoyl-sn-glycero-3-phosphate + CoA</text>
        <dbReference type="Rhea" id="RHEA:37159"/>
        <dbReference type="ChEBI" id="CHEBI:57287"/>
        <dbReference type="ChEBI" id="CHEBI:57383"/>
        <dbReference type="ChEBI" id="CHEBI:74544"/>
        <dbReference type="ChEBI" id="CHEBI:74563"/>
    </reaction>
    <physiologicalReaction direction="left-to-right" evidence="1">
        <dbReference type="Rhea" id="RHEA:37160"/>
    </physiologicalReaction>
</comment>
<comment type="catalytic activity">
    <reaction evidence="1">
        <text>1-(9Z-octadecenoyl)-sn-glycero-3-phosphocholine + (5Z,8Z,11Z,14Z)-eicosatetraenoyl-CoA = 1-(9Z)-octadecenoyl-2-(5Z,8Z,11Z,14Z)-icosatetraenoyl-sn-glycero-3-phosphocholine + CoA</text>
        <dbReference type="Rhea" id="RHEA:37395"/>
        <dbReference type="ChEBI" id="CHEBI:28610"/>
        <dbReference type="ChEBI" id="CHEBI:57287"/>
        <dbReference type="ChEBI" id="CHEBI:57368"/>
        <dbReference type="ChEBI" id="CHEBI:74671"/>
    </reaction>
    <physiologicalReaction direction="left-to-right" evidence="1">
        <dbReference type="Rhea" id="RHEA:37396"/>
    </physiologicalReaction>
</comment>
<comment type="catalytic activity">
    <reaction evidence="1">
        <text>1-(9Z-octadecenoyl)-sn-glycero-3-phospho-(1D-myo-inositol) + (5Z,8Z,11Z,14Z)-eicosatetraenoyl-CoA = 1-(9Z-octadecenoyl)-2-(5Z,8Z,11Z,14Z-eicosatetraenoyl)-sn-glycero-3-phospho-1D-myo-inositol + CoA</text>
        <dbReference type="Rhea" id="RHEA:42216"/>
        <dbReference type="ChEBI" id="CHEBI:57287"/>
        <dbReference type="ChEBI" id="CHEBI:57368"/>
        <dbReference type="ChEBI" id="CHEBI:78762"/>
        <dbReference type="ChEBI" id="CHEBI:78765"/>
    </reaction>
    <physiologicalReaction direction="left-to-right" evidence="1">
        <dbReference type="Rhea" id="RHEA:42217"/>
    </physiologicalReaction>
</comment>
<comment type="catalytic activity">
    <reaction evidence="1">
        <text>1-(9Z-octadecenoyl)-sn-glycero-3-phospho-L-serine + (5Z,8Z,11Z,14Z)-eicosatetraenoyl-CoA = 1-(9Z-octadecenoyl)-2-(5Z,8Z,11Z,14Z-eicosatetraenoyl)-sn-glycero-3-phospho-L-serine + CoA</text>
        <dbReference type="Rhea" id="RHEA:37379"/>
        <dbReference type="ChEBI" id="CHEBI:57287"/>
        <dbReference type="ChEBI" id="CHEBI:57368"/>
        <dbReference type="ChEBI" id="CHEBI:74617"/>
        <dbReference type="ChEBI" id="CHEBI:74897"/>
    </reaction>
    <physiologicalReaction direction="left-to-right" evidence="1">
        <dbReference type="Rhea" id="RHEA:37380"/>
    </physiologicalReaction>
</comment>
<comment type="catalytic activity">
    <reaction evidence="4">
        <text>1-hexadecanoyl-sn-glycero-3-phosphate + (9Z)-octadecenoyl-CoA = 1-hexadecanoyl-2-(9Z-octadecenoyl)-sn-glycero-3-phosphate + CoA</text>
        <dbReference type="Rhea" id="RHEA:33187"/>
        <dbReference type="ChEBI" id="CHEBI:57287"/>
        <dbReference type="ChEBI" id="CHEBI:57387"/>
        <dbReference type="ChEBI" id="CHEBI:57518"/>
        <dbReference type="ChEBI" id="CHEBI:64839"/>
    </reaction>
    <physiologicalReaction direction="left-to-right" evidence="8">
        <dbReference type="Rhea" id="RHEA:33188"/>
    </physiologicalReaction>
</comment>
<comment type="catalytic activity">
    <reaction evidence="4">
        <text>1-hexadecanoyl-sn-glycero-3-phosphate + (5Z,8Z,11Z,14Z)-eicosatetraenoyl-CoA = 1-hexadecanoyl-2-(5Z,8Z,11Z,14Z-eicosatetraenoyl)-sn-glycero-3-phosphate + CoA</text>
        <dbReference type="Rhea" id="RHEA:35915"/>
        <dbReference type="ChEBI" id="CHEBI:57287"/>
        <dbReference type="ChEBI" id="CHEBI:57368"/>
        <dbReference type="ChEBI" id="CHEBI:57518"/>
        <dbReference type="ChEBI" id="CHEBI:72864"/>
    </reaction>
    <physiologicalReaction direction="left-to-right" evidence="8">
        <dbReference type="Rhea" id="RHEA:35916"/>
    </physiologicalReaction>
</comment>
<comment type="catalytic activity">
    <reaction evidence="1">
        <text>1-heptadecanoyl-sn-glycero-3-phosphate + (5Z,8Z,11Z,14Z)-eicosatetraenoyl-CoA = 1-heptadecanoyl-2-(5Z,8Z,11Z,14Z)-eicosatetraenoyl-sn-glycero-3-phosphate + CoA</text>
        <dbReference type="Rhea" id="RHEA:42220"/>
        <dbReference type="ChEBI" id="CHEBI:57287"/>
        <dbReference type="ChEBI" id="CHEBI:57368"/>
        <dbReference type="ChEBI" id="CHEBI:74554"/>
        <dbReference type="ChEBI" id="CHEBI:78768"/>
    </reaction>
    <physiologicalReaction direction="left-to-right" evidence="1">
        <dbReference type="Rhea" id="RHEA:42221"/>
    </physiologicalReaction>
</comment>
<comment type="catalytic activity">
    <reaction evidence="1">
        <text>1-octadecanoyl-sn-glycero-3-phosphate + (9Z)-octadecenoyl-CoA = 1-octadecanoyl-2-(9Z-octadecenoyl)-sn-glycero-3-phosphate + CoA</text>
        <dbReference type="Rhea" id="RHEA:37163"/>
        <dbReference type="ChEBI" id="CHEBI:57287"/>
        <dbReference type="ChEBI" id="CHEBI:57387"/>
        <dbReference type="ChEBI" id="CHEBI:74560"/>
        <dbReference type="ChEBI" id="CHEBI:74565"/>
    </reaction>
    <physiologicalReaction direction="left-to-right" evidence="1">
        <dbReference type="Rhea" id="RHEA:37164"/>
    </physiologicalReaction>
</comment>
<comment type="catalytic activity">
    <reaction evidence="4">
        <text>1-octadecanoyl-sn-glycero-3-phosphate + (5Z,8Z,11Z,14Z)-eicosatetraenoyl-CoA = 1-octadecanoyl-2-(5Z,8Z,11Z,14Z-eicosatetraenoyl)-sn-glycero-3-phosphate + CoA</text>
        <dbReference type="Rhea" id="RHEA:42588"/>
        <dbReference type="ChEBI" id="CHEBI:57287"/>
        <dbReference type="ChEBI" id="CHEBI:57368"/>
        <dbReference type="ChEBI" id="CHEBI:74565"/>
        <dbReference type="ChEBI" id="CHEBI:77091"/>
    </reaction>
    <physiologicalReaction direction="left-to-right" evidence="8">
        <dbReference type="Rhea" id="RHEA:42589"/>
    </physiologicalReaction>
</comment>
<comment type="catalytic activity">
    <reaction evidence="1">
        <text>1-(9Z-octadecenoyl)-sn-glycero-3-phosphate + hexadecanoyl-CoA = 1-hexadecanoyl-2-(9Z-octadecenoyl)-sn-glycero-3-phosphate + CoA</text>
        <dbReference type="Rhea" id="RHEA:42592"/>
        <dbReference type="ChEBI" id="CHEBI:57287"/>
        <dbReference type="ChEBI" id="CHEBI:57379"/>
        <dbReference type="ChEBI" id="CHEBI:64839"/>
        <dbReference type="ChEBI" id="CHEBI:74544"/>
    </reaction>
    <physiologicalReaction direction="left-to-right" evidence="1">
        <dbReference type="Rhea" id="RHEA:42593"/>
    </physiologicalReaction>
</comment>
<comment type="catalytic activity">
    <reaction evidence="4">
        <text>1-O-(9Z-octadecenyl)-sn-glycero-3-phosphate + (5Z,8Z,11Z,14Z)-eicosatetraenoyl-CoA = 1-O-(9Z-octadecenyl)-2-(5Z,8Z,11Z,14Z-eicosatetraenoyl)-sn-glycero-3-phosphate + CoA</text>
        <dbReference type="Rhea" id="RHEA:45404"/>
        <dbReference type="ChEBI" id="CHEBI:57287"/>
        <dbReference type="ChEBI" id="CHEBI:57368"/>
        <dbReference type="ChEBI" id="CHEBI:78402"/>
        <dbReference type="ChEBI" id="CHEBI:85231"/>
    </reaction>
    <physiologicalReaction direction="left-to-right" evidence="8">
        <dbReference type="Rhea" id="RHEA:45405"/>
    </physiologicalReaction>
</comment>
<comment type="catalytic activity">
    <reaction evidence="4">
        <text>a 1-acyl-sn-glycero-3-phospho-(1D-myo-inositol) + (5Z,8Z,11Z,14Z)-eicosatetraenoyl-CoA = a 1-acyl-2-(5Z,8Z,11Z,14Z-eicosatetraenoyl)-sn-glycero-3-phospho-(1D-myo-inositol) + CoA</text>
        <dbReference type="Rhea" id="RHEA:37015"/>
        <dbReference type="ChEBI" id="CHEBI:57287"/>
        <dbReference type="ChEBI" id="CHEBI:57368"/>
        <dbReference type="ChEBI" id="CHEBI:64771"/>
        <dbReference type="ChEBI" id="CHEBI:75243"/>
    </reaction>
    <physiologicalReaction direction="left-to-right" evidence="8">
        <dbReference type="Rhea" id="RHEA:37016"/>
    </physiologicalReaction>
</comment>
<comment type="activity regulation">
    <text evidence="4">In males, activity increases in an age-dependent fashion, maybe derived from the induction by sex-hormones.</text>
</comment>
<comment type="biophysicochemical properties">
    <kinetics>
        <KM evidence="4">15.9 uM for arachidonoyl-CoA</KM>
        <KM evidence="4">26.3 uM for palmitoyl-LPA</KM>
        <Vmax evidence="4">50.4 nmol/min/mg enzyme toward arachidonoyl-CoA</Vmax>
        <Vmax evidence="4">21.8 nmol/min/mg enzyme toward palmitoyl-LPA</Vmax>
    </kinetics>
</comment>
<comment type="pathway">
    <text>Phospholipid metabolism; CDP-diacylglycerol biosynthesis; CDP-diacylglycerol from sn-glycerol 3-phosphate: step 2/3.</text>
</comment>
<comment type="subcellular location">
    <subcellularLocation>
        <location evidence="4">Endoplasmic reticulum membrane</location>
        <topology evidence="2">Multi-pass membrane protein</topology>
    </subcellularLocation>
    <subcellularLocation>
        <location evidence="1">Nucleus envelope</location>
    </subcellularLocation>
</comment>
<comment type="tissue specificity">
    <text evidence="4">Widely expressed. Mainly expressed in testis, kidney and liver (at protein level).</text>
</comment>
<comment type="induction">
    <text evidence="3">Up-regulated in the heart by clofibrate, a PPAR-alpha agonist.</text>
</comment>
<comment type="domain">
    <text evidence="8">The HXXXXD motif is essential for acyltransferase activity and may constitute the binding site for the phosphate moiety of the glycerol-3-phosphate.</text>
</comment>
<comment type="similarity">
    <text evidence="6">Belongs to the 1-acyl-sn-glycerol-3-phosphate acyltransferase family.</text>
</comment>
<comment type="sequence caution" evidence="6">
    <conflict type="erroneous initiation">
        <sequence resource="EMBL-CDS" id="BAC27043"/>
    </conflict>
    <text>Truncated N-terminus.</text>
</comment>
<protein>
    <recommendedName>
        <fullName>1-acyl-sn-glycerol-3-phosphate acyltransferase gamma</fullName>
        <ecNumber evidence="3 4">2.3.1.51</ecNumber>
    </recommendedName>
    <alternativeName>
        <fullName>1-acylglycerol-3-phosphate O-acyltransferase 3</fullName>
        <shortName>1-AGP acyltransferase 3</shortName>
        <shortName>1-AGPAT 3</shortName>
    </alternativeName>
    <alternativeName>
        <fullName>Lysophosphatidic acid acyltransferase gamma</fullName>
        <shortName>LPAAT-gamma</shortName>
    </alternativeName>
</protein>
<feature type="chain" id="PRO_0000208195" description="1-acyl-sn-glycerol-3-phosphate acyltransferase gamma">
    <location>
        <begin position="1"/>
        <end position="376"/>
    </location>
</feature>
<feature type="topological domain" description="Cytoplasmic" evidence="1">
    <location>
        <begin position="1"/>
        <end position="124"/>
    </location>
</feature>
<feature type="transmembrane region" description="Helical" evidence="2">
    <location>
        <begin position="125"/>
        <end position="145"/>
    </location>
</feature>
<feature type="topological domain" description="Lumenal" evidence="1">
    <location>
        <begin position="146"/>
        <end position="316"/>
    </location>
</feature>
<feature type="transmembrane region" description="Helical" evidence="2">
    <location>
        <begin position="317"/>
        <end position="339"/>
    </location>
</feature>
<feature type="topological domain" description="Cytoplasmic" evidence="1">
    <location>
        <begin position="340"/>
        <end position="376"/>
    </location>
</feature>
<feature type="short sequence motif" description="HXXXXD motif" evidence="8">
    <location>
        <begin position="96"/>
        <end position="101"/>
    </location>
</feature>
<feature type="mutagenesis site" description="Loss of LPA acyltransferase and LPI acyltransferase activities." evidence="4">
    <original>H</original>
    <variation>A</variation>
    <location>
        <position position="96"/>
    </location>
</feature>
<feature type="mutagenesis site" description="Loss of LPA acyltransferase and LPI acyltransferase activities." evidence="4">
    <original>D</original>
    <variation>A</variation>
    <location>
        <position position="101"/>
    </location>
</feature>
<feature type="mutagenesis site" description="Loss of LPA acyltransferase and LPI acyltransferase activities." evidence="4">
    <original>E</original>
    <variation>A</variation>
    <location>
        <position position="176"/>
    </location>
</feature>
<feature type="sequence conflict" description="In Ref. 5; AAH52382/AAH58519." evidence="6" ref="5">
    <original>F</original>
    <variation>V</variation>
    <location>
        <position position="21"/>
    </location>
</feature>
<feature type="sequence conflict" description="In Ref. 3; BAC27043." evidence="6" ref="3">
    <original>Y</original>
    <variation>N</variation>
    <location>
        <position position="249"/>
    </location>
</feature>
<reference key="1">
    <citation type="journal article" date="2005" name="Biochem. J.">
        <title>Cloning and characterization of murine 1-acyl-sn-glycerol 3-phosphate acyltransferases and their regulation by PPARalpha in murine heart.</title>
        <authorList>
            <person name="Lu B."/>
            <person name="Jiang Y.J."/>
            <person name="Zhou Y."/>
            <person name="Xu F.Y."/>
            <person name="Hatch G.M."/>
            <person name="Choy P.C."/>
        </authorList>
    </citation>
    <scope>NUCLEOTIDE SEQUENCE [MRNA]</scope>
    <scope>FUNCTION</scope>
    <scope>CATALYTIC ACTIVITY</scope>
    <scope>TISSUE SPECIFICITY</scope>
    <scope>INDUCTION</scope>
    <source>
        <strain>C57BL/6J</strain>
    </source>
</reference>
<reference key="2">
    <citation type="journal article" date="2009" name="J. Lipid Res.">
        <title>Characterization of mouse lysophosphatidic acid acyltransferase 3: an enzyme with dual functions in the testis.</title>
        <authorList>
            <person name="Yuki K."/>
            <person name="Shindou H."/>
            <person name="Hishikawa D."/>
            <person name="Shimizu T."/>
        </authorList>
    </citation>
    <scope>NUCLEOTIDE SEQUENCE [MRNA]</scope>
    <scope>FUNCTION</scope>
    <scope>CATALYTIC ACTIVITY</scope>
    <scope>TISSUE SPECIFICITY</scope>
    <scope>SUBCELLULAR LOCATION</scope>
    <scope>BIOPHYSICOCHEMICAL PROPERTIES</scope>
    <scope>MUTAGENESIS OF HIS-96; ASP-101 AND GLU-176</scope>
    <scope>ACTIVITY REGULATION</scope>
    <scope>MOTIF HXXXXD</scope>
</reference>
<reference key="3">
    <citation type="journal article" date="2005" name="Science">
        <title>The transcriptional landscape of the mammalian genome.</title>
        <authorList>
            <person name="Carninci P."/>
            <person name="Kasukawa T."/>
            <person name="Katayama S."/>
            <person name="Gough J."/>
            <person name="Frith M.C."/>
            <person name="Maeda N."/>
            <person name="Oyama R."/>
            <person name="Ravasi T."/>
            <person name="Lenhard B."/>
            <person name="Wells C."/>
            <person name="Kodzius R."/>
            <person name="Shimokawa K."/>
            <person name="Bajic V.B."/>
            <person name="Brenner S.E."/>
            <person name="Batalov S."/>
            <person name="Forrest A.R."/>
            <person name="Zavolan M."/>
            <person name="Davis M.J."/>
            <person name="Wilming L.G."/>
            <person name="Aidinis V."/>
            <person name="Allen J.E."/>
            <person name="Ambesi-Impiombato A."/>
            <person name="Apweiler R."/>
            <person name="Aturaliya R.N."/>
            <person name="Bailey T.L."/>
            <person name="Bansal M."/>
            <person name="Baxter L."/>
            <person name="Beisel K.W."/>
            <person name="Bersano T."/>
            <person name="Bono H."/>
            <person name="Chalk A.M."/>
            <person name="Chiu K.P."/>
            <person name="Choudhary V."/>
            <person name="Christoffels A."/>
            <person name="Clutterbuck D.R."/>
            <person name="Crowe M.L."/>
            <person name="Dalla E."/>
            <person name="Dalrymple B.P."/>
            <person name="de Bono B."/>
            <person name="Della Gatta G."/>
            <person name="di Bernardo D."/>
            <person name="Down T."/>
            <person name="Engstrom P."/>
            <person name="Fagiolini M."/>
            <person name="Faulkner G."/>
            <person name="Fletcher C.F."/>
            <person name="Fukushima T."/>
            <person name="Furuno M."/>
            <person name="Futaki S."/>
            <person name="Gariboldi M."/>
            <person name="Georgii-Hemming P."/>
            <person name="Gingeras T.R."/>
            <person name="Gojobori T."/>
            <person name="Green R.E."/>
            <person name="Gustincich S."/>
            <person name="Harbers M."/>
            <person name="Hayashi Y."/>
            <person name="Hensch T.K."/>
            <person name="Hirokawa N."/>
            <person name="Hill D."/>
            <person name="Huminiecki L."/>
            <person name="Iacono M."/>
            <person name="Ikeo K."/>
            <person name="Iwama A."/>
            <person name="Ishikawa T."/>
            <person name="Jakt M."/>
            <person name="Kanapin A."/>
            <person name="Katoh M."/>
            <person name="Kawasawa Y."/>
            <person name="Kelso J."/>
            <person name="Kitamura H."/>
            <person name="Kitano H."/>
            <person name="Kollias G."/>
            <person name="Krishnan S.P."/>
            <person name="Kruger A."/>
            <person name="Kummerfeld S.K."/>
            <person name="Kurochkin I.V."/>
            <person name="Lareau L.F."/>
            <person name="Lazarevic D."/>
            <person name="Lipovich L."/>
            <person name="Liu J."/>
            <person name="Liuni S."/>
            <person name="McWilliam S."/>
            <person name="Madan Babu M."/>
            <person name="Madera M."/>
            <person name="Marchionni L."/>
            <person name="Matsuda H."/>
            <person name="Matsuzawa S."/>
            <person name="Miki H."/>
            <person name="Mignone F."/>
            <person name="Miyake S."/>
            <person name="Morris K."/>
            <person name="Mottagui-Tabar S."/>
            <person name="Mulder N."/>
            <person name="Nakano N."/>
            <person name="Nakauchi H."/>
            <person name="Ng P."/>
            <person name="Nilsson R."/>
            <person name="Nishiguchi S."/>
            <person name="Nishikawa S."/>
            <person name="Nori F."/>
            <person name="Ohara O."/>
            <person name="Okazaki Y."/>
            <person name="Orlando V."/>
            <person name="Pang K.C."/>
            <person name="Pavan W.J."/>
            <person name="Pavesi G."/>
            <person name="Pesole G."/>
            <person name="Petrovsky N."/>
            <person name="Piazza S."/>
            <person name="Reed J."/>
            <person name="Reid J.F."/>
            <person name="Ring B.Z."/>
            <person name="Ringwald M."/>
            <person name="Rost B."/>
            <person name="Ruan Y."/>
            <person name="Salzberg S.L."/>
            <person name="Sandelin A."/>
            <person name="Schneider C."/>
            <person name="Schoenbach C."/>
            <person name="Sekiguchi K."/>
            <person name="Semple C.A."/>
            <person name="Seno S."/>
            <person name="Sessa L."/>
            <person name="Sheng Y."/>
            <person name="Shibata Y."/>
            <person name="Shimada H."/>
            <person name="Shimada K."/>
            <person name="Silva D."/>
            <person name="Sinclair B."/>
            <person name="Sperling S."/>
            <person name="Stupka E."/>
            <person name="Sugiura K."/>
            <person name="Sultana R."/>
            <person name="Takenaka Y."/>
            <person name="Taki K."/>
            <person name="Tammoja K."/>
            <person name="Tan S.L."/>
            <person name="Tang S."/>
            <person name="Taylor M.S."/>
            <person name="Tegner J."/>
            <person name="Teichmann S.A."/>
            <person name="Ueda H.R."/>
            <person name="van Nimwegen E."/>
            <person name="Verardo R."/>
            <person name="Wei C.L."/>
            <person name="Yagi K."/>
            <person name="Yamanishi H."/>
            <person name="Zabarovsky E."/>
            <person name="Zhu S."/>
            <person name="Zimmer A."/>
            <person name="Hide W."/>
            <person name="Bult C."/>
            <person name="Grimmond S.M."/>
            <person name="Teasdale R.D."/>
            <person name="Liu E.T."/>
            <person name="Brusic V."/>
            <person name="Quackenbush J."/>
            <person name="Wahlestedt C."/>
            <person name="Mattick J.S."/>
            <person name="Hume D.A."/>
            <person name="Kai C."/>
            <person name="Sasaki D."/>
            <person name="Tomaru Y."/>
            <person name="Fukuda S."/>
            <person name="Kanamori-Katayama M."/>
            <person name="Suzuki M."/>
            <person name="Aoki J."/>
            <person name="Arakawa T."/>
            <person name="Iida J."/>
            <person name="Imamura K."/>
            <person name="Itoh M."/>
            <person name="Kato T."/>
            <person name="Kawaji H."/>
            <person name="Kawagashira N."/>
            <person name="Kawashima T."/>
            <person name="Kojima M."/>
            <person name="Kondo S."/>
            <person name="Konno H."/>
            <person name="Nakano K."/>
            <person name="Ninomiya N."/>
            <person name="Nishio T."/>
            <person name="Okada M."/>
            <person name="Plessy C."/>
            <person name="Shibata K."/>
            <person name="Shiraki T."/>
            <person name="Suzuki S."/>
            <person name="Tagami M."/>
            <person name="Waki K."/>
            <person name="Watahiki A."/>
            <person name="Okamura-Oho Y."/>
            <person name="Suzuki H."/>
            <person name="Kawai J."/>
            <person name="Hayashizaki Y."/>
        </authorList>
    </citation>
    <scope>NUCLEOTIDE SEQUENCE [LARGE SCALE MRNA]</scope>
    <source>
        <strain>C57BL/6J</strain>
        <tissue>Head</tissue>
        <tissue>Liver</tissue>
        <tissue>Pituitary</tissue>
        <tissue>Testis</tissue>
    </source>
</reference>
<reference key="4">
    <citation type="submission" date="2005-09" db="EMBL/GenBank/DDBJ databases">
        <authorList>
            <person name="Mural R.J."/>
            <person name="Adams M.D."/>
            <person name="Myers E.W."/>
            <person name="Smith H.O."/>
            <person name="Venter J.C."/>
        </authorList>
    </citation>
    <scope>NUCLEOTIDE SEQUENCE [LARGE SCALE GENOMIC DNA]</scope>
</reference>
<reference key="5">
    <citation type="journal article" date="2004" name="Genome Res.">
        <title>The status, quality, and expansion of the NIH full-length cDNA project: the Mammalian Gene Collection (MGC).</title>
        <authorList>
            <consortium name="The MGC Project Team"/>
        </authorList>
    </citation>
    <scope>NUCLEOTIDE SEQUENCE [LARGE SCALE MRNA]</scope>
    <source>
        <strain>C57BL/6J</strain>
        <tissue>Embryonic brain</tissue>
    </source>
</reference>
<reference key="6">
    <citation type="submission" date="2009-01" db="UniProtKB">
        <authorList>
            <person name="Lubec G."/>
            <person name="Sunyer B."/>
            <person name="Chen W.-Q."/>
        </authorList>
    </citation>
    <scope>PROTEIN SEQUENCE OF 237-248</scope>
    <scope>IDENTIFICATION BY MASS SPECTROMETRY</scope>
    <source>
        <strain>OF1</strain>
        <tissue>Hippocampus</tissue>
    </source>
</reference>
<reference key="7">
    <citation type="journal article" date="2010" name="Cell">
        <title>A tissue-specific atlas of mouse protein phosphorylation and expression.</title>
        <authorList>
            <person name="Huttlin E.L."/>
            <person name="Jedrychowski M.P."/>
            <person name="Elias J.E."/>
            <person name="Goswami T."/>
            <person name="Rad R."/>
            <person name="Beausoleil S.A."/>
            <person name="Villen J."/>
            <person name="Haas W."/>
            <person name="Sowa M.E."/>
            <person name="Gygi S.P."/>
        </authorList>
    </citation>
    <scope>IDENTIFICATION BY MASS SPECTROMETRY [LARGE SCALE ANALYSIS]</scope>
    <source>
        <tissue>Brain</tissue>
        <tissue>Brown adipose tissue</tissue>
        <tissue>Heart</tissue>
        <tissue>Kidney</tissue>
        <tissue>Liver</tissue>
        <tissue>Lung</tissue>
        <tissue>Pancreas</tissue>
        <tissue>Spleen</tissue>
        <tissue>Testis</tissue>
    </source>
</reference>
<sequence length="376" mass="43296">MGLLAYLKTQFVVHLLIGFVFVVSGLIINFTQLCTLALWPISKHLYRRINCRLAYSLWSQLVMLLEWWSCTECTLFTDQATVDHFGKEHVVVILNHNFEIDFLCGWTMCERFGVLGSSKVLAKRELLCVPLIGWTWYFLEIVFCKRKWEEDRDTVIEGLRRLADYPEYMWFLLYCEGTRFTETKHRISMEVAASKGLPPLKYHLLPRTKGFTTAVQCLRGTVAAIYDVTLNFRGNKNPSLLGILYGKKYEADMCVRRFPLEDIPADETSAAQWLHKLYQEKDALQEMYKQKGVFPGEQFKPARRPWTLLNFLCWATILLSPLFSFVLGVFASGSPLLILTFLGFVGAASFGVRRLIGVTEIEKGSSYGNQELKKKE</sequence>
<organism>
    <name type="scientific">Mus musculus</name>
    <name type="common">Mouse</name>
    <dbReference type="NCBI Taxonomy" id="10090"/>
    <lineage>
        <taxon>Eukaryota</taxon>
        <taxon>Metazoa</taxon>
        <taxon>Chordata</taxon>
        <taxon>Craniata</taxon>
        <taxon>Vertebrata</taxon>
        <taxon>Euteleostomi</taxon>
        <taxon>Mammalia</taxon>
        <taxon>Eutheria</taxon>
        <taxon>Euarchontoglires</taxon>
        <taxon>Glires</taxon>
        <taxon>Rodentia</taxon>
        <taxon>Myomorpha</taxon>
        <taxon>Muroidea</taxon>
        <taxon>Muridae</taxon>
        <taxon>Murinae</taxon>
        <taxon>Mus</taxon>
        <taxon>Mus</taxon>
    </lineage>
</organism>